<sequence length="163" mass="17505">MGTSEAAPPPFARVAPALFIGNARAAGATELLVRAGITLCVNVSRQQPGPRAPGVAELRVPVFDDPAEDLLTHLEPTCAAMEAAVRDGGSCLVYCKNGRSRSAAVCTAYLMRHRGHSLDRAFQMVKSARPVAEPNLGFWAQLQKYEQTLQAQAILPREPIDPE</sequence>
<accession>Q8BTR5</accession>
<protein>
    <recommendedName>
        <fullName>Dual specificity phosphatase 28</fullName>
        <ecNumber>3.1.3.16</ecNumber>
        <ecNumber>3.1.3.48</ecNumber>
    </recommendedName>
</protein>
<gene>
    <name type="primary">Dusp28</name>
</gene>
<name>DUS28_MOUSE</name>
<evidence type="ECO:0000250" key="1">
    <source>
        <dbReference type="UniProtKB" id="Q4G0W2"/>
    </source>
</evidence>
<evidence type="ECO:0000255" key="2">
    <source>
        <dbReference type="PROSITE-ProRule" id="PRU00160"/>
    </source>
</evidence>
<evidence type="ECO:0000305" key="3"/>
<evidence type="ECO:0007829" key="4">
    <source>
        <dbReference type="PDB" id="2HCM"/>
    </source>
</evidence>
<keyword id="KW-0002">3D-structure</keyword>
<keyword id="KW-0378">Hydrolase</keyword>
<keyword id="KW-0904">Protein phosphatase</keyword>
<keyword id="KW-1185">Reference proteome</keyword>
<reference key="1">
    <citation type="journal article" date="2005" name="Science">
        <title>The transcriptional landscape of the mammalian genome.</title>
        <authorList>
            <person name="Carninci P."/>
            <person name="Kasukawa T."/>
            <person name="Katayama S."/>
            <person name="Gough J."/>
            <person name="Frith M.C."/>
            <person name="Maeda N."/>
            <person name="Oyama R."/>
            <person name="Ravasi T."/>
            <person name="Lenhard B."/>
            <person name="Wells C."/>
            <person name="Kodzius R."/>
            <person name="Shimokawa K."/>
            <person name="Bajic V.B."/>
            <person name="Brenner S.E."/>
            <person name="Batalov S."/>
            <person name="Forrest A.R."/>
            <person name="Zavolan M."/>
            <person name="Davis M.J."/>
            <person name="Wilming L.G."/>
            <person name="Aidinis V."/>
            <person name="Allen J.E."/>
            <person name="Ambesi-Impiombato A."/>
            <person name="Apweiler R."/>
            <person name="Aturaliya R.N."/>
            <person name="Bailey T.L."/>
            <person name="Bansal M."/>
            <person name="Baxter L."/>
            <person name="Beisel K.W."/>
            <person name="Bersano T."/>
            <person name="Bono H."/>
            <person name="Chalk A.M."/>
            <person name="Chiu K.P."/>
            <person name="Choudhary V."/>
            <person name="Christoffels A."/>
            <person name="Clutterbuck D.R."/>
            <person name="Crowe M.L."/>
            <person name="Dalla E."/>
            <person name="Dalrymple B.P."/>
            <person name="de Bono B."/>
            <person name="Della Gatta G."/>
            <person name="di Bernardo D."/>
            <person name="Down T."/>
            <person name="Engstrom P."/>
            <person name="Fagiolini M."/>
            <person name="Faulkner G."/>
            <person name="Fletcher C.F."/>
            <person name="Fukushima T."/>
            <person name="Furuno M."/>
            <person name="Futaki S."/>
            <person name="Gariboldi M."/>
            <person name="Georgii-Hemming P."/>
            <person name="Gingeras T.R."/>
            <person name="Gojobori T."/>
            <person name="Green R.E."/>
            <person name="Gustincich S."/>
            <person name="Harbers M."/>
            <person name="Hayashi Y."/>
            <person name="Hensch T.K."/>
            <person name="Hirokawa N."/>
            <person name="Hill D."/>
            <person name="Huminiecki L."/>
            <person name="Iacono M."/>
            <person name="Ikeo K."/>
            <person name="Iwama A."/>
            <person name="Ishikawa T."/>
            <person name="Jakt M."/>
            <person name="Kanapin A."/>
            <person name="Katoh M."/>
            <person name="Kawasawa Y."/>
            <person name="Kelso J."/>
            <person name="Kitamura H."/>
            <person name="Kitano H."/>
            <person name="Kollias G."/>
            <person name="Krishnan S.P."/>
            <person name="Kruger A."/>
            <person name="Kummerfeld S.K."/>
            <person name="Kurochkin I.V."/>
            <person name="Lareau L.F."/>
            <person name="Lazarevic D."/>
            <person name="Lipovich L."/>
            <person name="Liu J."/>
            <person name="Liuni S."/>
            <person name="McWilliam S."/>
            <person name="Madan Babu M."/>
            <person name="Madera M."/>
            <person name="Marchionni L."/>
            <person name="Matsuda H."/>
            <person name="Matsuzawa S."/>
            <person name="Miki H."/>
            <person name="Mignone F."/>
            <person name="Miyake S."/>
            <person name="Morris K."/>
            <person name="Mottagui-Tabar S."/>
            <person name="Mulder N."/>
            <person name="Nakano N."/>
            <person name="Nakauchi H."/>
            <person name="Ng P."/>
            <person name="Nilsson R."/>
            <person name="Nishiguchi S."/>
            <person name="Nishikawa S."/>
            <person name="Nori F."/>
            <person name="Ohara O."/>
            <person name="Okazaki Y."/>
            <person name="Orlando V."/>
            <person name="Pang K.C."/>
            <person name="Pavan W.J."/>
            <person name="Pavesi G."/>
            <person name="Pesole G."/>
            <person name="Petrovsky N."/>
            <person name="Piazza S."/>
            <person name="Reed J."/>
            <person name="Reid J.F."/>
            <person name="Ring B.Z."/>
            <person name="Ringwald M."/>
            <person name="Rost B."/>
            <person name="Ruan Y."/>
            <person name="Salzberg S.L."/>
            <person name="Sandelin A."/>
            <person name="Schneider C."/>
            <person name="Schoenbach C."/>
            <person name="Sekiguchi K."/>
            <person name="Semple C.A."/>
            <person name="Seno S."/>
            <person name="Sessa L."/>
            <person name="Sheng Y."/>
            <person name="Shibata Y."/>
            <person name="Shimada H."/>
            <person name="Shimada K."/>
            <person name="Silva D."/>
            <person name="Sinclair B."/>
            <person name="Sperling S."/>
            <person name="Stupka E."/>
            <person name="Sugiura K."/>
            <person name="Sultana R."/>
            <person name="Takenaka Y."/>
            <person name="Taki K."/>
            <person name="Tammoja K."/>
            <person name="Tan S.L."/>
            <person name="Tang S."/>
            <person name="Taylor M.S."/>
            <person name="Tegner J."/>
            <person name="Teichmann S.A."/>
            <person name="Ueda H.R."/>
            <person name="van Nimwegen E."/>
            <person name="Verardo R."/>
            <person name="Wei C.L."/>
            <person name="Yagi K."/>
            <person name="Yamanishi H."/>
            <person name="Zabarovsky E."/>
            <person name="Zhu S."/>
            <person name="Zimmer A."/>
            <person name="Hide W."/>
            <person name="Bult C."/>
            <person name="Grimmond S.M."/>
            <person name="Teasdale R.D."/>
            <person name="Liu E.T."/>
            <person name="Brusic V."/>
            <person name="Quackenbush J."/>
            <person name="Wahlestedt C."/>
            <person name="Mattick J.S."/>
            <person name="Hume D.A."/>
            <person name="Kai C."/>
            <person name="Sasaki D."/>
            <person name="Tomaru Y."/>
            <person name="Fukuda S."/>
            <person name="Kanamori-Katayama M."/>
            <person name="Suzuki M."/>
            <person name="Aoki J."/>
            <person name="Arakawa T."/>
            <person name="Iida J."/>
            <person name="Imamura K."/>
            <person name="Itoh M."/>
            <person name="Kato T."/>
            <person name="Kawaji H."/>
            <person name="Kawagashira N."/>
            <person name="Kawashima T."/>
            <person name="Kojima M."/>
            <person name="Kondo S."/>
            <person name="Konno H."/>
            <person name="Nakano K."/>
            <person name="Ninomiya N."/>
            <person name="Nishio T."/>
            <person name="Okada M."/>
            <person name="Plessy C."/>
            <person name="Shibata K."/>
            <person name="Shiraki T."/>
            <person name="Suzuki S."/>
            <person name="Tagami M."/>
            <person name="Waki K."/>
            <person name="Watahiki A."/>
            <person name="Okamura-Oho Y."/>
            <person name="Suzuki H."/>
            <person name="Kawai J."/>
            <person name="Hayashizaki Y."/>
        </authorList>
    </citation>
    <scope>NUCLEOTIDE SEQUENCE [LARGE SCALE MRNA]</scope>
    <source>
        <strain>C57BL/6J</strain>
        <strain>NOD</strain>
        <tissue>Corpora quadrigemina</tissue>
        <tissue>Thymus</tissue>
    </source>
</reference>
<reference key="2">
    <citation type="journal article" date="2004" name="Genome Res.">
        <title>The status, quality, and expansion of the NIH full-length cDNA project: the Mammalian Gene Collection (MGC).</title>
        <authorList>
            <consortium name="The MGC Project Team"/>
        </authorList>
    </citation>
    <scope>NUCLEOTIDE SEQUENCE [LARGE SCALE MRNA]</scope>
    <source>
        <tissue>Brain</tissue>
    </source>
</reference>
<reference key="3">
    <citation type="journal article" date="2010" name="Cell">
        <title>A tissue-specific atlas of mouse protein phosphorylation and expression.</title>
        <authorList>
            <person name="Huttlin E.L."/>
            <person name="Jedrychowski M.P."/>
            <person name="Elias J.E."/>
            <person name="Goswami T."/>
            <person name="Rad R."/>
            <person name="Beausoleil S.A."/>
            <person name="Villen J."/>
            <person name="Haas W."/>
            <person name="Sowa M.E."/>
            <person name="Gygi S.P."/>
        </authorList>
    </citation>
    <scope>IDENTIFICATION BY MASS SPECTROMETRY [LARGE SCALE ANALYSIS]</scope>
    <source>
        <tissue>Brain</tissue>
        <tissue>Liver</tissue>
    </source>
</reference>
<reference key="4">
    <citation type="journal article" date="2007" name="J. Struct. Funct. Genomics">
        <title>Structural genomics of protein phosphatases.</title>
        <authorList>
            <person name="Almo S.C."/>
            <person name="Bonanno J.B."/>
            <person name="Sauder J.M."/>
            <person name="Emtage S."/>
            <person name="Dilorenzo T.P."/>
            <person name="Malashkevich V."/>
            <person name="Wasserman S.R."/>
            <person name="Swaminathan S."/>
            <person name="Eswaramoorthy S."/>
            <person name="Agarwal R."/>
            <person name="Kumaran D."/>
            <person name="Madegowda M."/>
            <person name="Ragumani S."/>
            <person name="Patskovsky Y."/>
            <person name="Alvarado J."/>
            <person name="Ramagopal U.A."/>
            <person name="Faber-Barata J."/>
            <person name="Chance M.R."/>
            <person name="Sali A."/>
            <person name="Fiser A."/>
            <person name="Zhang Z.Y."/>
            <person name="Lawrence D.S."/>
            <person name="Burley S.K."/>
        </authorList>
    </citation>
    <scope>X-RAY CRYSTALLOGRAPHY (2.0 ANGSTROMS)</scope>
</reference>
<organism>
    <name type="scientific">Mus musculus</name>
    <name type="common">Mouse</name>
    <dbReference type="NCBI Taxonomy" id="10090"/>
    <lineage>
        <taxon>Eukaryota</taxon>
        <taxon>Metazoa</taxon>
        <taxon>Chordata</taxon>
        <taxon>Craniata</taxon>
        <taxon>Vertebrata</taxon>
        <taxon>Euteleostomi</taxon>
        <taxon>Mammalia</taxon>
        <taxon>Eutheria</taxon>
        <taxon>Euarchontoglires</taxon>
        <taxon>Glires</taxon>
        <taxon>Rodentia</taxon>
        <taxon>Myomorpha</taxon>
        <taxon>Muroidea</taxon>
        <taxon>Muridae</taxon>
        <taxon>Murinae</taxon>
        <taxon>Mus</taxon>
        <taxon>Mus</taxon>
    </lineage>
</organism>
<feature type="chain" id="PRO_0000302841" description="Dual specificity phosphatase 28">
    <location>
        <begin position="1"/>
        <end position="163"/>
    </location>
</feature>
<feature type="domain" description="Tyrosine-protein phosphatase" evidence="2">
    <location>
        <begin position="10"/>
        <end position="151"/>
    </location>
</feature>
<feature type="active site" description="Phosphocysteine intermediate" evidence="2">
    <location>
        <position position="95"/>
    </location>
</feature>
<feature type="strand" evidence="4">
    <location>
        <begin position="10"/>
        <end position="15"/>
    </location>
</feature>
<feature type="strand" evidence="4">
    <location>
        <begin position="18"/>
        <end position="22"/>
    </location>
</feature>
<feature type="helix" evidence="4">
    <location>
        <begin position="23"/>
        <end position="27"/>
    </location>
</feature>
<feature type="helix" evidence="4">
    <location>
        <begin position="29"/>
        <end position="34"/>
    </location>
</feature>
<feature type="strand" evidence="4">
    <location>
        <begin position="37"/>
        <end position="42"/>
    </location>
</feature>
<feature type="strand" evidence="4">
    <location>
        <begin position="44"/>
        <end position="46"/>
    </location>
</feature>
<feature type="strand" evidence="4">
    <location>
        <begin position="56"/>
        <end position="59"/>
    </location>
</feature>
<feature type="helix" evidence="4">
    <location>
        <begin position="71"/>
        <end position="86"/>
    </location>
</feature>
<feature type="strand" evidence="4">
    <location>
        <begin position="90"/>
        <end position="99"/>
    </location>
</feature>
<feature type="helix" evidence="4">
    <location>
        <begin position="100"/>
        <end position="113"/>
    </location>
</feature>
<feature type="helix" evidence="4">
    <location>
        <begin position="118"/>
        <end position="128"/>
    </location>
</feature>
<feature type="helix" evidence="4">
    <location>
        <begin position="136"/>
        <end position="151"/>
    </location>
</feature>
<proteinExistence type="evidence at protein level"/>
<comment type="function">
    <text evidence="1">Has phosphatase activity with the synthetic substrate 6,8-difluoro-4-methylumbelliferyl phosphate (in vitro). Has almost no detectable activity with phosphotyrosine, even less activity with phosphothreonine and displays complete lack of activity with phosphoserine. The poor activity with phosphotyrosine may be due to steric hindrance by bulky amino acid sidechains that obstruct access to the active site.</text>
</comment>
<comment type="catalytic activity">
    <reaction>
        <text>O-phospho-L-tyrosyl-[protein] + H2O = L-tyrosyl-[protein] + phosphate</text>
        <dbReference type="Rhea" id="RHEA:10684"/>
        <dbReference type="Rhea" id="RHEA-COMP:10136"/>
        <dbReference type="Rhea" id="RHEA-COMP:20101"/>
        <dbReference type="ChEBI" id="CHEBI:15377"/>
        <dbReference type="ChEBI" id="CHEBI:43474"/>
        <dbReference type="ChEBI" id="CHEBI:46858"/>
        <dbReference type="ChEBI" id="CHEBI:61978"/>
        <dbReference type="EC" id="3.1.3.48"/>
    </reaction>
</comment>
<comment type="catalytic activity">
    <reaction>
        <text>O-phospho-L-seryl-[protein] + H2O = L-seryl-[protein] + phosphate</text>
        <dbReference type="Rhea" id="RHEA:20629"/>
        <dbReference type="Rhea" id="RHEA-COMP:9863"/>
        <dbReference type="Rhea" id="RHEA-COMP:11604"/>
        <dbReference type="ChEBI" id="CHEBI:15377"/>
        <dbReference type="ChEBI" id="CHEBI:29999"/>
        <dbReference type="ChEBI" id="CHEBI:43474"/>
        <dbReference type="ChEBI" id="CHEBI:83421"/>
        <dbReference type="EC" id="3.1.3.16"/>
    </reaction>
</comment>
<comment type="catalytic activity">
    <reaction>
        <text>O-phospho-L-threonyl-[protein] + H2O = L-threonyl-[protein] + phosphate</text>
        <dbReference type="Rhea" id="RHEA:47004"/>
        <dbReference type="Rhea" id="RHEA-COMP:11060"/>
        <dbReference type="Rhea" id="RHEA-COMP:11605"/>
        <dbReference type="ChEBI" id="CHEBI:15377"/>
        <dbReference type="ChEBI" id="CHEBI:30013"/>
        <dbReference type="ChEBI" id="CHEBI:43474"/>
        <dbReference type="ChEBI" id="CHEBI:61977"/>
        <dbReference type="EC" id="3.1.3.16"/>
    </reaction>
</comment>
<comment type="subunit">
    <text evidence="1">Monomer.</text>
</comment>
<comment type="similarity">
    <text evidence="3">Belongs to the protein-tyrosine phosphatase family. Non-receptor class dual specificity subfamily.</text>
</comment>
<dbReference type="EC" id="3.1.3.16"/>
<dbReference type="EC" id="3.1.3.48"/>
<dbReference type="EMBL" id="AK088940">
    <property type="protein sequence ID" value="BAC40664.1"/>
    <property type="molecule type" value="mRNA"/>
</dbReference>
<dbReference type="EMBL" id="AK163560">
    <property type="protein sequence ID" value="BAE37397.1"/>
    <property type="molecule type" value="mRNA"/>
</dbReference>
<dbReference type="EMBL" id="BC119127">
    <property type="protein sequence ID" value="AAI19128.1"/>
    <property type="molecule type" value="mRNA"/>
</dbReference>
<dbReference type="CCDS" id="CCDS15179.1"/>
<dbReference type="RefSeq" id="NP_780327.1">
    <property type="nucleotide sequence ID" value="NM_175118.3"/>
</dbReference>
<dbReference type="PDB" id="2HCM">
    <property type="method" value="X-ray"/>
    <property type="resolution" value="2.00 A"/>
    <property type="chains" value="A=2-163"/>
</dbReference>
<dbReference type="PDBsum" id="2HCM"/>
<dbReference type="SMR" id="Q8BTR5"/>
<dbReference type="FunCoup" id="Q8BTR5">
    <property type="interactions" value="40"/>
</dbReference>
<dbReference type="STRING" id="10090.ENSMUSP00000057690"/>
<dbReference type="PhosphoSitePlus" id="Q8BTR5"/>
<dbReference type="PaxDb" id="10090-ENSMUSP00000057690"/>
<dbReference type="PeptideAtlas" id="Q8BTR5"/>
<dbReference type="ProteomicsDB" id="277532"/>
<dbReference type="Antibodypedia" id="50666">
    <property type="antibodies" value="22 antibodies from 12 providers"/>
</dbReference>
<dbReference type="DNASU" id="67446"/>
<dbReference type="Ensembl" id="ENSMUST00000060913.8">
    <property type="protein sequence ID" value="ENSMUSP00000057690.7"/>
    <property type="gene ID" value="ENSMUSG00000047067.8"/>
</dbReference>
<dbReference type="GeneID" id="67446"/>
<dbReference type="KEGG" id="mmu:67446"/>
<dbReference type="UCSC" id="uc007cbu.1">
    <property type="organism name" value="mouse"/>
</dbReference>
<dbReference type="AGR" id="MGI:1914696"/>
<dbReference type="CTD" id="285193"/>
<dbReference type="MGI" id="MGI:1914696">
    <property type="gene designation" value="Dusp28"/>
</dbReference>
<dbReference type="VEuPathDB" id="HostDB:ENSMUSG00000047067"/>
<dbReference type="eggNOG" id="KOG1718">
    <property type="taxonomic scope" value="Eukaryota"/>
</dbReference>
<dbReference type="GeneTree" id="ENSGT00940000161528"/>
<dbReference type="HOGENOM" id="CLU_027074_3_3_1"/>
<dbReference type="InParanoid" id="Q8BTR5"/>
<dbReference type="OMA" id="THLEPTC"/>
<dbReference type="OrthoDB" id="285418at2759"/>
<dbReference type="PhylomeDB" id="Q8BTR5"/>
<dbReference type="TreeFam" id="TF105128"/>
<dbReference type="BioGRID-ORCS" id="67446">
    <property type="hits" value="3 hits in 76 CRISPR screens"/>
</dbReference>
<dbReference type="EvolutionaryTrace" id="Q8BTR5"/>
<dbReference type="PRO" id="PR:Q8BTR5"/>
<dbReference type="Proteomes" id="UP000000589">
    <property type="component" value="Chromosome 1"/>
</dbReference>
<dbReference type="RNAct" id="Q8BTR5">
    <property type="molecule type" value="protein"/>
</dbReference>
<dbReference type="Bgee" id="ENSMUSG00000047067">
    <property type="expression patterns" value="Expressed in interventricular septum and 154 other cell types or tissues"/>
</dbReference>
<dbReference type="GO" id="GO:0016791">
    <property type="term" value="F:phosphatase activity"/>
    <property type="evidence" value="ECO:0000250"/>
    <property type="project" value="UniProtKB"/>
</dbReference>
<dbReference type="GO" id="GO:0004722">
    <property type="term" value="F:protein serine/threonine phosphatase activity"/>
    <property type="evidence" value="ECO:0007669"/>
    <property type="project" value="UniProtKB-EC"/>
</dbReference>
<dbReference type="GO" id="GO:0004725">
    <property type="term" value="F:protein tyrosine phosphatase activity"/>
    <property type="evidence" value="ECO:0007669"/>
    <property type="project" value="UniProtKB-EC"/>
</dbReference>
<dbReference type="GO" id="GO:0016311">
    <property type="term" value="P:dephosphorylation"/>
    <property type="evidence" value="ECO:0000250"/>
    <property type="project" value="UniProtKB"/>
</dbReference>
<dbReference type="CDD" id="cd14574">
    <property type="entry name" value="DUSP28"/>
    <property type="match status" value="1"/>
</dbReference>
<dbReference type="FunFam" id="3.90.190.10:FF:000107">
    <property type="entry name" value="Dual specificity phosphatase 28"/>
    <property type="match status" value="1"/>
</dbReference>
<dbReference type="Gene3D" id="3.90.190.10">
    <property type="entry name" value="Protein tyrosine phosphatase superfamily"/>
    <property type="match status" value="1"/>
</dbReference>
<dbReference type="InterPro" id="IPR000340">
    <property type="entry name" value="Dual-sp_phosphatase_cat-dom"/>
</dbReference>
<dbReference type="InterPro" id="IPR052103">
    <property type="entry name" value="Dual_spec_Phospatases"/>
</dbReference>
<dbReference type="InterPro" id="IPR029021">
    <property type="entry name" value="Prot-tyrosine_phosphatase-like"/>
</dbReference>
<dbReference type="InterPro" id="IPR000387">
    <property type="entry name" value="Tyr_Pase_dom"/>
</dbReference>
<dbReference type="InterPro" id="IPR020422">
    <property type="entry name" value="TYR_PHOSPHATASE_DUAL_dom"/>
</dbReference>
<dbReference type="PANTHER" id="PTHR45961:SF7">
    <property type="entry name" value="DUAL SPECIFICITY PHOSPHATASE 28"/>
    <property type="match status" value="1"/>
</dbReference>
<dbReference type="PANTHER" id="PTHR45961">
    <property type="entry name" value="IP21249P"/>
    <property type="match status" value="1"/>
</dbReference>
<dbReference type="Pfam" id="PF00782">
    <property type="entry name" value="DSPc"/>
    <property type="match status" value="1"/>
</dbReference>
<dbReference type="SMART" id="SM00195">
    <property type="entry name" value="DSPc"/>
    <property type="match status" value="1"/>
</dbReference>
<dbReference type="SUPFAM" id="SSF52799">
    <property type="entry name" value="(Phosphotyrosine protein) phosphatases II"/>
    <property type="match status" value="1"/>
</dbReference>
<dbReference type="PROSITE" id="PS50056">
    <property type="entry name" value="TYR_PHOSPHATASE_2"/>
    <property type="match status" value="1"/>
</dbReference>
<dbReference type="PROSITE" id="PS50054">
    <property type="entry name" value="TYR_PHOSPHATASE_DUAL"/>
    <property type="match status" value="1"/>
</dbReference>